<dbReference type="EMBL" id="CP001298">
    <property type="protein sequence ID" value="ACK82545.1"/>
    <property type="molecule type" value="Genomic_DNA"/>
</dbReference>
<dbReference type="RefSeq" id="WP_015950358.1">
    <property type="nucleotide sequence ID" value="NC_011757.1"/>
</dbReference>
<dbReference type="SMR" id="B7KTL8"/>
<dbReference type="KEGG" id="mch:Mchl_1682"/>
<dbReference type="HOGENOM" id="CLU_079503_1_1_5"/>
<dbReference type="Proteomes" id="UP000002385">
    <property type="component" value="Chromosome"/>
</dbReference>
<dbReference type="GO" id="GO:0005886">
    <property type="term" value="C:plasma membrane"/>
    <property type="evidence" value="ECO:0007669"/>
    <property type="project" value="UniProtKB-SubCell"/>
</dbReference>
<dbReference type="GO" id="GO:0020037">
    <property type="term" value="F:heme binding"/>
    <property type="evidence" value="ECO:0007669"/>
    <property type="project" value="InterPro"/>
</dbReference>
<dbReference type="GO" id="GO:0046872">
    <property type="term" value="F:metal ion binding"/>
    <property type="evidence" value="ECO:0007669"/>
    <property type="project" value="UniProtKB-KW"/>
</dbReference>
<dbReference type="GO" id="GO:0017004">
    <property type="term" value="P:cytochrome complex assembly"/>
    <property type="evidence" value="ECO:0007669"/>
    <property type="project" value="UniProtKB-KW"/>
</dbReference>
<dbReference type="FunFam" id="2.40.50.140:FF:000104">
    <property type="entry name" value="Cytochrome c-type biogenesis protein CcmE"/>
    <property type="match status" value="1"/>
</dbReference>
<dbReference type="Gene3D" id="2.40.50.140">
    <property type="entry name" value="Nucleic acid-binding proteins"/>
    <property type="match status" value="1"/>
</dbReference>
<dbReference type="HAMAP" id="MF_01959">
    <property type="entry name" value="CcmE"/>
    <property type="match status" value="1"/>
</dbReference>
<dbReference type="InterPro" id="IPR004329">
    <property type="entry name" value="CcmE"/>
</dbReference>
<dbReference type="InterPro" id="IPR036127">
    <property type="entry name" value="CcmE-like_sf"/>
</dbReference>
<dbReference type="InterPro" id="IPR012340">
    <property type="entry name" value="NA-bd_OB-fold"/>
</dbReference>
<dbReference type="NCBIfam" id="NF009727">
    <property type="entry name" value="PRK13254.1-1"/>
    <property type="match status" value="1"/>
</dbReference>
<dbReference type="NCBIfam" id="NF009729">
    <property type="entry name" value="PRK13254.1-3"/>
    <property type="match status" value="1"/>
</dbReference>
<dbReference type="NCBIfam" id="NF009731">
    <property type="entry name" value="PRK13254.1-5"/>
    <property type="match status" value="1"/>
</dbReference>
<dbReference type="PANTHER" id="PTHR34128">
    <property type="entry name" value="CYTOCHROME C-TYPE BIOGENESIS PROTEIN CCME HOMOLOG, MITOCHONDRIAL"/>
    <property type="match status" value="1"/>
</dbReference>
<dbReference type="PANTHER" id="PTHR34128:SF2">
    <property type="entry name" value="CYTOCHROME C-TYPE BIOGENESIS PROTEIN CCME HOMOLOG, MITOCHONDRIAL"/>
    <property type="match status" value="1"/>
</dbReference>
<dbReference type="Pfam" id="PF03100">
    <property type="entry name" value="CcmE"/>
    <property type="match status" value="1"/>
</dbReference>
<dbReference type="SUPFAM" id="SSF82093">
    <property type="entry name" value="Heme chaperone CcmE"/>
    <property type="match status" value="1"/>
</dbReference>
<keyword id="KW-0997">Cell inner membrane</keyword>
<keyword id="KW-1003">Cell membrane</keyword>
<keyword id="KW-0201">Cytochrome c-type biogenesis</keyword>
<keyword id="KW-0349">Heme</keyword>
<keyword id="KW-0408">Iron</keyword>
<keyword id="KW-0472">Membrane</keyword>
<keyword id="KW-0479">Metal-binding</keyword>
<keyword id="KW-0735">Signal-anchor</keyword>
<keyword id="KW-0812">Transmembrane</keyword>
<keyword id="KW-1133">Transmembrane helix</keyword>
<sequence>MTRKSRRLILIAACGAVLALALGLILSAMSGSIVFFRSPAEVAAQGVAPGTRFRLGGLVKDGSVKRGPDQNVEFAVTDTNATVPVQYRGLLPDLFREGQGIVAEGTLDVGGVFRADTVLAKHDENYMPREVADALKAQGRWQEGGGKDASKAAPKDAAKPETADATLGQRSER</sequence>
<comment type="function">
    <text evidence="1">Heme chaperone required for the biogenesis of c-type cytochromes. Transiently binds heme delivered by CcmC and transfers the heme to apo-cytochromes in a process facilitated by CcmF and CcmH.</text>
</comment>
<comment type="subcellular location">
    <subcellularLocation>
        <location evidence="1">Cell inner membrane</location>
        <topology evidence="1">Single-pass type II membrane protein</topology>
        <orientation evidence="1">Periplasmic side</orientation>
    </subcellularLocation>
</comment>
<comment type="similarity">
    <text evidence="1">Belongs to the CcmE/CycJ family.</text>
</comment>
<accession>B7KTL8</accession>
<organism>
    <name type="scientific">Methylorubrum extorquens (strain CM4 / NCIMB 13688)</name>
    <name type="common">Methylobacterium extorquens</name>
    <dbReference type="NCBI Taxonomy" id="440085"/>
    <lineage>
        <taxon>Bacteria</taxon>
        <taxon>Pseudomonadati</taxon>
        <taxon>Pseudomonadota</taxon>
        <taxon>Alphaproteobacteria</taxon>
        <taxon>Hyphomicrobiales</taxon>
        <taxon>Methylobacteriaceae</taxon>
        <taxon>Methylorubrum</taxon>
    </lineage>
</organism>
<evidence type="ECO:0000255" key="1">
    <source>
        <dbReference type="HAMAP-Rule" id="MF_01959"/>
    </source>
</evidence>
<evidence type="ECO:0000256" key="2">
    <source>
        <dbReference type="SAM" id="MobiDB-lite"/>
    </source>
</evidence>
<name>CCME_METC4</name>
<reference key="1">
    <citation type="submission" date="2008-12" db="EMBL/GenBank/DDBJ databases">
        <title>Complete sequence of chromosome of Methylobacterium chloromethanicum CM4.</title>
        <authorList>
            <consortium name="US DOE Joint Genome Institute"/>
            <person name="Lucas S."/>
            <person name="Copeland A."/>
            <person name="Lapidus A."/>
            <person name="Glavina del Rio T."/>
            <person name="Dalin E."/>
            <person name="Tice H."/>
            <person name="Bruce D."/>
            <person name="Goodwin L."/>
            <person name="Pitluck S."/>
            <person name="Chertkov O."/>
            <person name="Brettin T."/>
            <person name="Detter J.C."/>
            <person name="Han C."/>
            <person name="Larimer F."/>
            <person name="Land M."/>
            <person name="Hauser L."/>
            <person name="Kyrpides N."/>
            <person name="Mikhailova N."/>
            <person name="Marx C."/>
            <person name="Richardson P."/>
        </authorList>
    </citation>
    <scope>NUCLEOTIDE SEQUENCE [LARGE SCALE GENOMIC DNA]</scope>
    <source>
        <strain>CM4 / NCIMB 13688</strain>
    </source>
</reference>
<protein>
    <recommendedName>
        <fullName evidence="1">Cytochrome c-type biogenesis protein CcmE</fullName>
    </recommendedName>
    <alternativeName>
        <fullName evidence="1">Cytochrome c maturation protein E</fullName>
    </alternativeName>
    <alternativeName>
        <fullName evidence="1">Heme chaperone CcmE</fullName>
    </alternativeName>
</protein>
<proteinExistence type="inferred from homology"/>
<gene>
    <name evidence="1" type="primary">ccmE</name>
    <name evidence="1" type="synonym">cycJ</name>
    <name type="ordered locus">Mchl_1682</name>
</gene>
<feature type="chain" id="PRO_1000189031" description="Cytochrome c-type biogenesis protein CcmE">
    <location>
        <begin position="1"/>
        <end position="173"/>
    </location>
</feature>
<feature type="topological domain" description="Cytoplasmic" evidence="1">
    <location>
        <begin position="1"/>
        <end position="7"/>
    </location>
</feature>
<feature type="transmembrane region" description="Helical; Signal-anchor for type II membrane protein" evidence="1">
    <location>
        <begin position="8"/>
        <end position="28"/>
    </location>
</feature>
<feature type="topological domain" description="Periplasmic" evidence="1">
    <location>
        <begin position="29"/>
        <end position="173"/>
    </location>
</feature>
<feature type="region of interest" description="Disordered" evidence="2">
    <location>
        <begin position="134"/>
        <end position="173"/>
    </location>
</feature>
<feature type="compositionally biased region" description="Basic and acidic residues" evidence="2">
    <location>
        <begin position="145"/>
        <end position="162"/>
    </location>
</feature>
<feature type="binding site" description="covalent" evidence="1">
    <location>
        <position position="122"/>
    </location>
    <ligand>
        <name>heme</name>
        <dbReference type="ChEBI" id="CHEBI:30413"/>
    </ligand>
</feature>
<feature type="binding site" description="axial binding residue" evidence="1">
    <location>
        <position position="126"/>
    </location>
    <ligand>
        <name>heme</name>
        <dbReference type="ChEBI" id="CHEBI:30413"/>
    </ligand>
    <ligandPart>
        <name>Fe</name>
        <dbReference type="ChEBI" id="CHEBI:18248"/>
    </ligandPart>
</feature>